<dbReference type="EMBL" id="AP009123">
    <property type="protein sequence ID" value="BAF41262.1"/>
    <property type="molecule type" value="Genomic_DNA"/>
</dbReference>
<dbReference type="RefSeq" id="YP_913202.1">
    <property type="nucleotide sequence ID" value="NC_008641.1"/>
</dbReference>
<dbReference type="SMR" id="A0ZZ50"/>
<dbReference type="GeneID" id="4575226"/>
<dbReference type="OrthoDB" id="99at2759"/>
<dbReference type="GO" id="GO:0009535">
    <property type="term" value="C:chloroplast thylakoid membrane"/>
    <property type="evidence" value="ECO:0007669"/>
    <property type="project" value="UniProtKB-SubCell"/>
</dbReference>
<dbReference type="GO" id="GO:0009539">
    <property type="term" value="C:photosystem II reaction center"/>
    <property type="evidence" value="ECO:0007669"/>
    <property type="project" value="InterPro"/>
</dbReference>
<dbReference type="GO" id="GO:0015979">
    <property type="term" value="P:photosynthesis"/>
    <property type="evidence" value="ECO:0007669"/>
    <property type="project" value="UniProtKB-UniRule"/>
</dbReference>
<dbReference type="HAMAP" id="MF_01317">
    <property type="entry name" value="PSII_PsbL"/>
    <property type="match status" value="1"/>
</dbReference>
<dbReference type="InterPro" id="IPR003372">
    <property type="entry name" value="PSII_PsbL"/>
</dbReference>
<dbReference type="InterPro" id="IPR037266">
    <property type="entry name" value="PSII_PsbL_sf"/>
</dbReference>
<dbReference type="NCBIfam" id="NF001972">
    <property type="entry name" value="PRK00753.1"/>
    <property type="match status" value="1"/>
</dbReference>
<dbReference type="Pfam" id="PF02419">
    <property type="entry name" value="PsbL"/>
    <property type="match status" value="1"/>
</dbReference>
<dbReference type="SUPFAM" id="SSF161017">
    <property type="entry name" value="Photosystem II reaction center protein L, PsbL"/>
    <property type="match status" value="1"/>
</dbReference>
<sequence>MTQSNPNEQNVELNRTSLYWGLLLIFVLAVLFSNYFFN</sequence>
<organism>
    <name type="scientific">Gossypium barbadense</name>
    <name type="common">Sea Island cotton</name>
    <name type="synonym">Hibiscus barbadensis</name>
    <dbReference type="NCBI Taxonomy" id="3634"/>
    <lineage>
        <taxon>Eukaryota</taxon>
        <taxon>Viridiplantae</taxon>
        <taxon>Streptophyta</taxon>
        <taxon>Embryophyta</taxon>
        <taxon>Tracheophyta</taxon>
        <taxon>Spermatophyta</taxon>
        <taxon>Magnoliopsida</taxon>
        <taxon>eudicotyledons</taxon>
        <taxon>Gunneridae</taxon>
        <taxon>Pentapetalae</taxon>
        <taxon>rosids</taxon>
        <taxon>malvids</taxon>
        <taxon>Malvales</taxon>
        <taxon>Malvaceae</taxon>
        <taxon>Malvoideae</taxon>
        <taxon>Gossypium</taxon>
    </lineage>
</organism>
<feature type="chain" id="PRO_0000276208" description="Photosystem II reaction center protein L">
    <location>
        <begin position="1"/>
        <end position="38"/>
    </location>
</feature>
<feature type="transmembrane region" description="Helical" evidence="1">
    <location>
        <begin position="17"/>
        <end position="37"/>
    </location>
</feature>
<accession>A0ZZ50</accession>
<protein>
    <recommendedName>
        <fullName evidence="1">Photosystem II reaction center protein L</fullName>
        <shortName evidence="1">PSII-L</shortName>
    </recommendedName>
</protein>
<keyword id="KW-0150">Chloroplast</keyword>
<keyword id="KW-0472">Membrane</keyword>
<keyword id="KW-0602">Photosynthesis</keyword>
<keyword id="KW-0604">Photosystem II</keyword>
<keyword id="KW-0934">Plastid</keyword>
<keyword id="KW-0674">Reaction center</keyword>
<keyword id="KW-0793">Thylakoid</keyword>
<keyword id="KW-0812">Transmembrane</keyword>
<keyword id="KW-1133">Transmembrane helix</keyword>
<proteinExistence type="inferred from homology"/>
<gene>
    <name evidence="1" type="primary">psbL</name>
</gene>
<geneLocation type="chloroplast"/>
<comment type="function">
    <text evidence="1">One of the components of the core complex of photosystem II (PSII). PSII is a light-driven water:plastoquinone oxidoreductase that uses light energy to abstract electrons from H(2)O, generating O(2) and a proton gradient subsequently used for ATP formation. It consists of a core antenna complex that captures photons, and an electron transfer chain that converts photonic excitation into a charge separation. This subunit is found at the monomer-monomer interface and is required for correct PSII assembly and/or dimerization.</text>
</comment>
<comment type="subunit">
    <text evidence="1">PSII is composed of 1 copy each of membrane proteins PsbA, PsbB, PsbC, PsbD, PsbE, PsbF, PsbH, PsbI, PsbJ, PsbK, PsbL, PsbM, PsbT, PsbX, PsbY, PsbZ, Psb30/Ycf12, at least 3 peripheral proteins of the oxygen-evolving complex and a large number of cofactors. It forms dimeric complexes.</text>
</comment>
<comment type="subcellular location">
    <subcellularLocation>
        <location evidence="1">Plastid</location>
        <location evidence="1">Chloroplast thylakoid membrane</location>
        <topology evidence="1">Single-pass membrane protein</topology>
    </subcellularLocation>
</comment>
<comment type="similarity">
    <text evidence="1">Belongs to the PsbL family.</text>
</comment>
<evidence type="ECO:0000255" key="1">
    <source>
        <dbReference type="HAMAP-Rule" id="MF_01317"/>
    </source>
</evidence>
<reference key="1">
    <citation type="journal article" date="2006" name="Genes Genet. Syst.">
        <title>Complete nucleotide sequence of the cotton (Gossypium barbadense L.) chloroplast genome with a comparative analysis of sequences among 9 dicot plants.</title>
        <authorList>
            <person name="Ibrahim R.I.H."/>
            <person name="Azuma J."/>
            <person name="Sakamoto M."/>
        </authorList>
    </citation>
    <scope>NUCLEOTIDE SEQUENCE [LARGE SCALE GENOMIC DNA]</scope>
</reference>
<name>PSBL_GOSBA</name>